<evidence type="ECO:0000250" key="1"/>
<evidence type="ECO:0000256" key="2">
    <source>
        <dbReference type="SAM" id="MobiDB-lite"/>
    </source>
</evidence>
<evidence type="ECO:0000269" key="3">
    <source>
    </source>
</evidence>
<evidence type="ECO:0000269" key="4">
    <source>
    </source>
</evidence>
<evidence type="ECO:0000303" key="5">
    <source>
    </source>
</evidence>
<evidence type="ECO:0000305" key="6"/>
<evidence type="ECO:0000305" key="7">
    <source>
    </source>
</evidence>
<evidence type="ECO:0007744" key="8">
    <source>
    </source>
</evidence>
<evidence type="ECO:0007744" key="9">
    <source>
    </source>
</evidence>
<evidence type="ECO:0007744" key="10">
    <source>
    </source>
</evidence>
<evidence type="ECO:0007829" key="11">
    <source>
        <dbReference type="PDB" id="5XTB"/>
    </source>
</evidence>
<comment type="function">
    <text evidence="4">Accessory subunit of the mitochondrial membrane respiratory chain NADH dehydrogenase (Complex I), that is believed not to be involved in catalysis. Complex I functions in the transfer of electrons from NADH to the respiratory chain. The immediate electron acceptor for the enzyme is believed to be ubiquinone. May be the terminally assembled subunit of Complex I.</text>
</comment>
<comment type="subunit">
    <text evidence="3 4">Complex I is composed of 45 different subunits. This is a component of the flavoprotein-sulfur (FP) fragment of the enzyme.</text>
</comment>
<comment type="interaction">
    <interactant intactId="EBI-721902">
        <id>P56181</id>
    </interactant>
    <interactant intactId="EBI-748312">
        <id>P49821</id>
        <label>NDUFV1</label>
    </interactant>
    <organismsDiffer>false</organismsDiffer>
    <experiments>5</experiments>
</comment>
<comment type="subcellular location">
    <subcellularLocation>
        <location evidence="7">Mitochondrion inner membrane</location>
        <topology evidence="6">Peripheral membrane protein</topology>
        <orientation evidence="6">Matrix side</orientation>
    </subcellularLocation>
</comment>
<comment type="alternative products">
    <event type="alternative splicing"/>
    <isoform>
        <id>P56181-1</id>
        <name>1</name>
        <sequence type="displayed"/>
    </isoform>
    <isoform>
        <id>P56181-2</id>
        <name>2</name>
        <sequence type="described" ref="VSP_038552"/>
    </isoform>
</comment>
<comment type="similarity">
    <text evidence="6">Belongs to the complex I NDUFV3 subunit family.</text>
</comment>
<feature type="transit peptide" description="Mitochondrion" evidence="1">
    <location>
        <begin position="1"/>
        <end position="34"/>
    </location>
</feature>
<feature type="chain" id="PRO_0000020025" description="NADH dehydrogenase [ubiquinone] flavoprotein 3, mitochondrial">
    <location>
        <begin position="35"/>
        <end position="108"/>
    </location>
</feature>
<feature type="region of interest" description="Disordered" evidence="2">
    <location>
        <begin position="33"/>
        <end position="72"/>
    </location>
</feature>
<feature type="modified residue" description="Phosphoserine" evidence="9">
    <location>
        <position position="105"/>
    </location>
</feature>
<feature type="splice variant" id="VSP_038552" description="In isoform 2." evidence="5">
    <original>KK</original>
    <variation>KNVVEPKERGKLLATQTAAELSKNLSSPSSYPPAVNKGRKVASPSPSGSVLFTDEGVPKFLSRKTLVEFPQKVLSPFRKQGSDSEARQVGRKVTSPSSSSSSSSSDSESDDEADVSEVTPRVVSKGRGGLRKPEASHSFENRAPRVTVSAKEKTLLQKPHVDITDPEKPHQPKKKGSPAKPSEGRENARPKTTMPRSQVDEEFLKQSLKEKQLQKTFRLNEIDKESQKPFEVKGPLPVHTKSGLSAPPKGSPAPAVLAEEARAEGQLQASPPGAAEGHLEKPVPEPQRKAAPPLPRKETSGTQGIEGHLKGGQAIVEDQIPPSNLETVPVENNHGFHEKTAALKLEAEGEAMEDAAAPGDDRGGTQE</variation>
    <location>
        <begin position="56"/>
        <end position="57"/>
    </location>
</feature>
<feature type="sequence conflict" description="In Ref. 1; CAB56704." evidence="6" ref="1">
    <original>Q</original>
    <variation>K</variation>
    <location>
        <position position="9"/>
    </location>
</feature>
<feature type="helix" evidence="11">
    <location>
        <begin position="83"/>
        <end position="90"/>
    </location>
</feature>
<feature type="helix" evidence="11">
    <location>
        <begin position="91"/>
        <end position="94"/>
    </location>
</feature>
<feature type="modified residue" description="Phosphoserine" evidence="8">
    <location sequence="P56181-2">
        <position position="160"/>
    </location>
</feature>
<feature type="modified residue" description="Phosphoserine" evidence="8 10">
    <location sequence="P56181-2">
        <position position="162"/>
    </location>
</feature>
<feature type="modified residue" description="Phosphoserine" evidence="8 10">
    <location sequence="P56181-2">
        <position position="164"/>
    </location>
</feature>
<feature type="sequence conflict" description="In Ref. 7; AAH21217." evidence="6" ref="7">
    <original>D</original>
    <variation>N</variation>
    <location sequence="P56181-2">
        <position position="415"/>
    </location>
</feature>
<name>NDUV3_HUMAN</name>
<organism>
    <name type="scientific">Homo sapiens</name>
    <name type="common">Human</name>
    <dbReference type="NCBI Taxonomy" id="9606"/>
    <lineage>
        <taxon>Eukaryota</taxon>
        <taxon>Metazoa</taxon>
        <taxon>Chordata</taxon>
        <taxon>Craniata</taxon>
        <taxon>Vertebrata</taxon>
        <taxon>Euteleostomi</taxon>
        <taxon>Mammalia</taxon>
        <taxon>Eutheria</taxon>
        <taxon>Euarchontoglires</taxon>
        <taxon>Primates</taxon>
        <taxon>Haplorrhini</taxon>
        <taxon>Catarrhini</taxon>
        <taxon>Hominidae</taxon>
        <taxon>Homo</taxon>
    </lineage>
</organism>
<dbReference type="EMBL" id="X99726">
    <property type="protein sequence ID" value="CAB56704.1"/>
    <property type="molecule type" value="Genomic_DNA"/>
</dbReference>
<dbReference type="EMBL" id="X99727">
    <property type="protein sequence ID" value="CAB56704.1"/>
    <property type="status" value="JOINED"/>
    <property type="molecule type" value="Genomic_DNA"/>
</dbReference>
<dbReference type="EMBL" id="X99728">
    <property type="protein sequence ID" value="CAB56704.1"/>
    <property type="status" value="JOINED"/>
    <property type="molecule type" value="Genomic_DNA"/>
</dbReference>
<dbReference type="EMBL" id="AB038163">
    <property type="protein sequence ID" value="BAB13732.1"/>
    <property type="molecule type" value="Genomic_DNA"/>
</dbReference>
<dbReference type="EMBL" id="CR542174">
    <property type="protein sequence ID" value="CAG46971.1"/>
    <property type="molecule type" value="mRNA"/>
</dbReference>
<dbReference type="EMBL" id="CR542190">
    <property type="protein sequence ID" value="CAG46987.1"/>
    <property type="molecule type" value="mRNA"/>
</dbReference>
<dbReference type="EMBL" id="AK289586">
    <property type="protein sequence ID" value="BAF82275.1"/>
    <property type="molecule type" value="mRNA"/>
</dbReference>
<dbReference type="EMBL" id="AP001629">
    <property type="status" value="NOT_ANNOTATED_CDS"/>
    <property type="molecule type" value="Genomic_DNA"/>
</dbReference>
<dbReference type="EMBL" id="CH471079">
    <property type="protein sequence ID" value="EAX09524.1"/>
    <property type="molecule type" value="Genomic_DNA"/>
</dbReference>
<dbReference type="EMBL" id="CH471079">
    <property type="protein sequence ID" value="EAX09526.1"/>
    <property type="molecule type" value="Genomic_DNA"/>
</dbReference>
<dbReference type="EMBL" id="BC021217">
    <property type="protein sequence ID" value="AAH21217.2"/>
    <property type="molecule type" value="mRNA"/>
</dbReference>
<dbReference type="EMBL" id="BC033766">
    <property type="protein sequence ID" value="AAH33766.1"/>
    <property type="molecule type" value="mRNA"/>
</dbReference>
<dbReference type="EMBL" id="BC054016">
    <property type="protein sequence ID" value="AAH54016.1"/>
    <property type="molecule type" value="mRNA"/>
</dbReference>
<dbReference type="CCDS" id="CCDS33572.1">
    <molecule id="P56181-2"/>
</dbReference>
<dbReference type="CCDS" id="CCDS33573.1">
    <molecule id="P56181-1"/>
</dbReference>
<dbReference type="RefSeq" id="NP_001001503.1">
    <molecule id="P56181-1"/>
    <property type="nucleotide sequence ID" value="NM_001001503.2"/>
</dbReference>
<dbReference type="RefSeq" id="NP_066553.3">
    <molecule id="P56181-2"/>
    <property type="nucleotide sequence ID" value="NM_021075.3"/>
</dbReference>
<dbReference type="PDB" id="5XTB">
    <property type="method" value="EM"/>
    <property type="resolution" value="3.40 A"/>
    <property type="chains" value="K=74-106"/>
</dbReference>
<dbReference type="PDB" id="5XTD">
    <property type="method" value="EM"/>
    <property type="resolution" value="3.70 A"/>
    <property type="chains" value="K=74-106"/>
</dbReference>
<dbReference type="PDB" id="5XTH">
    <property type="method" value="EM"/>
    <property type="resolution" value="3.90 A"/>
    <property type="chains" value="K=74-106"/>
</dbReference>
<dbReference type="PDB" id="5XTI">
    <property type="method" value="EM"/>
    <property type="resolution" value="17.40 A"/>
    <property type="chains" value="BK/K=74-106"/>
</dbReference>
<dbReference type="PDBsum" id="5XTB"/>
<dbReference type="PDBsum" id="5XTD"/>
<dbReference type="PDBsum" id="5XTH"/>
<dbReference type="PDBsum" id="5XTI"/>
<dbReference type="SMR" id="P56181"/>
<dbReference type="BioGRID" id="110809">
    <property type="interactions" value="198"/>
</dbReference>
<dbReference type="ComplexPortal" id="CPX-577">
    <property type="entry name" value="Mitochondrial respiratory chain complex I"/>
</dbReference>
<dbReference type="CORUM" id="P56181"/>
<dbReference type="FunCoup" id="P56181">
    <property type="interactions" value="814"/>
</dbReference>
<dbReference type="IntAct" id="P56181">
    <property type="interactions" value="90"/>
</dbReference>
<dbReference type="MINT" id="P56181"/>
<dbReference type="STRING" id="9606.ENSP00000346196"/>
<dbReference type="BindingDB" id="P56181"/>
<dbReference type="ChEMBL" id="CHEMBL2363065"/>
<dbReference type="DrugBank" id="DB00157">
    <property type="generic name" value="NADH"/>
</dbReference>
<dbReference type="DrugBank" id="DB09270">
    <property type="generic name" value="Ubidecarenone"/>
</dbReference>
<dbReference type="DrugCentral" id="P56181"/>
<dbReference type="iPTMnet" id="P56181"/>
<dbReference type="PhosphoSitePlus" id="P56181"/>
<dbReference type="SwissPalm" id="P56181"/>
<dbReference type="BioMuta" id="NDUFV3"/>
<dbReference type="jPOST" id="P56181"/>
<dbReference type="MassIVE" id="P56181"/>
<dbReference type="PaxDb" id="9606-ENSP00000346196"/>
<dbReference type="PeptideAtlas" id="P56181"/>
<dbReference type="ProteomicsDB" id="56899">
    <molecule id="P56181-1"/>
</dbReference>
<dbReference type="ProteomicsDB" id="56900">
    <molecule id="P56181-2"/>
</dbReference>
<dbReference type="Pumba" id="P56181"/>
<dbReference type="TopDownProteomics" id="P56181-1">
    <molecule id="P56181-1"/>
</dbReference>
<dbReference type="Antibodypedia" id="9794">
    <property type="antibodies" value="153 antibodies from 28 providers"/>
</dbReference>
<dbReference type="DNASU" id="4731"/>
<dbReference type="Ensembl" id="ENST00000340344.4">
    <molecule id="P56181-1"/>
    <property type="protein sequence ID" value="ENSP00000342895.3"/>
    <property type="gene ID" value="ENSG00000160194.18"/>
</dbReference>
<dbReference type="Ensembl" id="ENST00000354250.7">
    <molecule id="P56181-2"/>
    <property type="protein sequence ID" value="ENSP00000346196.2"/>
    <property type="gene ID" value="ENSG00000160194.18"/>
</dbReference>
<dbReference type="GeneID" id="4731"/>
<dbReference type="KEGG" id="hsa:4731"/>
<dbReference type="MANE-Select" id="ENST00000354250.7">
    <molecule id="P56181-2"/>
    <property type="protein sequence ID" value="ENSP00000346196.2"/>
    <property type="RefSeq nucleotide sequence ID" value="NM_021075.4"/>
    <property type="RefSeq protein sequence ID" value="NP_066553.3"/>
</dbReference>
<dbReference type="UCSC" id="uc002zcm.4">
    <molecule id="P56181-1"/>
    <property type="organism name" value="human"/>
</dbReference>
<dbReference type="AGR" id="HGNC:7719"/>
<dbReference type="CTD" id="4731"/>
<dbReference type="DisGeNET" id="4731"/>
<dbReference type="GeneCards" id="NDUFV3"/>
<dbReference type="HGNC" id="HGNC:7719">
    <property type="gene designation" value="NDUFV3"/>
</dbReference>
<dbReference type="HPA" id="ENSG00000160194">
    <property type="expression patterns" value="Tissue enhanced (skeletal)"/>
</dbReference>
<dbReference type="MalaCards" id="NDUFV3"/>
<dbReference type="MIM" id="602184">
    <property type="type" value="gene"/>
</dbReference>
<dbReference type="neXtProt" id="NX_P56181"/>
<dbReference type="OpenTargets" id="ENSG00000160194"/>
<dbReference type="PharmGKB" id="PA31529"/>
<dbReference type="VEuPathDB" id="HostDB:ENSG00000160194"/>
<dbReference type="eggNOG" id="ENOG502S46A">
    <property type="taxonomic scope" value="Eukaryota"/>
</dbReference>
<dbReference type="GeneTree" id="ENSGT00390000012196"/>
<dbReference type="HOGENOM" id="CLU_045834_0_0_1"/>
<dbReference type="InParanoid" id="P56181"/>
<dbReference type="OMA" id="PVEKNHG"/>
<dbReference type="OrthoDB" id="6161911at2759"/>
<dbReference type="PAN-GO" id="P56181">
    <property type="GO annotations" value="2 GO annotations based on evolutionary models"/>
</dbReference>
<dbReference type="PhylomeDB" id="P56181"/>
<dbReference type="TreeFam" id="TF338771"/>
<dbReference type="BioCyc" id="MetaCyc:HS08459-MONOMER"/>
<dbReference type="PathwayCommons" id="P56181"/>
<dbReference type="Reactome" id="R-HSA-611105">
    <property type="pathway name" value="Respiratory electron transport"/>
</dbReference>
<dbReference type="Reactome" id="R-HSA-6799198">
    <property type="pathway name" value="Complex I biogenesis"/>
</dbReference>
<dbReference type="Reactome" id="R-HSA-9837999">
    <property type="pathway name" value="Mitochondrial protein degradation"/>
</dbReference>
<dbReference type="SignaLink" id="P56181"/>
<dbReference type="SIGNOR" id="P56181"/>
<dbReference type="BioGRID-ORCS" id="4731">
    <property type="hits" value="7 hits in 1165 CRISPR screens"/>
</dbReference>
<dbReference type="ChiTaRS" id="NDUFV3">
    <property type="organism name" value="human"/>
</dbReference>
<dbReference type="GeneWiki" id="NDUFV3"/>
<dbReference type="GenomeRNAi" id="4731"/>
<dbReference type="Pharos" id="P56181">
    <property type="development level" value="Tclin"/>
</dbReference>
<dbReference type="PRO" id="PR:P56181"/>
<dbReference type="Proteomes" id="UP000005640">
    <property type="component" value="Chromosome 21"/>
</dbReference>
<dbReference type="RNAct" id="P56181">
    <property type="molecule type" value="protein"/>
</dbReference>
<dbReference type="Bgee" id="ENSG00000160194">
    <property type="expression patterns" value="Expressed in left ventricle myocardium and 192 other cell types or tissues"/>
</dbReference>
<dbReference type="GO" id="GO:0005743">
    <property type="term" value="C:mitochondrial inner membrane"/>
    <property type="evidence" value="ECO:0000314"/>
    <property type="project" value="ComplexPortal"/>
</dbReference>
<dbReference type="GO" id="GO:0005739">
    <property type="term" value="C:mitochondrion"/>
    <property type="evidence" value="ECO:0000314"/>
    <property type="project" value="HPA"/>
</dbReference>
<dbReference type="GO" id="GO:0045271">
    <property type="term" value="C:respiratory chain complex I"/>
    <property type="evidence" value="ECO:0000314"/>
    <property type="project" value="UniProtKB"/>
</dbReference>
<dbReference type="GO" id="GO:0008137">
    <property type="term" value="F:NADH dehydrogenase (ubiquinone) activity"/>
    <property type="evidence" value="ECO:0000304"/>
    <property type="project" value="ProtInc"/>
</dbReference>
<dbReference type="GO" id="GO:0003723">
    <property type="term" value="F:RNA binding"/>
    <property type="evidence" value="ECO:0007005"/>
    <property type="project" value="UniProtKB"/>
</dbReference>
<dbReference type="GO" id="GO:0009060">
    <property type="term" value="P:aerobic respiration"/>
    <property type="evidence" value="ECO:0000303"/>
    <property type="project" value="ComplexPortal"/>
</dbReference>
<dbReference type="GO" id="GO:0042775">
    <property type="term" value="P:mitochondrial ATP synthesis coupled electron transport"/>
    <property type="evidence" value="ECO:0000315"/>
    <property type="project" value="CAFA"/>
</dbReference>
<dbReference type="GO" id="GO:0006120">
    <property type="term" value="P:mitochondrial electron transport, NADH to ubiquinone"/>
    <property type="evidence" value="ECO:0000304"/>
    <property type="project" value="ProtInc"/>
</dbReference>
<dbReference type="GO" id="GO:0042776">
    <property type="term" value="P:proton motive force-driven mitochondrial ATP synthesis"/>
    <property type="evidence" value="ECO:0000303"/>
    <property type="project" value="ComplexPortal"/>
</dbReference>
<dbReference type="InterPro" id="IPR026193">
    <property type="entry name" value="NDUFV3"/>
</dbReference>
<dbReference type="PANTHER" id="PTHR17117:SF1">
    <property type="entry name" value="NADH DEHYDROGENASE [UBIQUINONE] FLAVOPROTEIN 3, MITOCHONDRIAL"/>
    <property type="match status" value="1"/>
</dbReference>
<dbReference type="PANTHER" id="PTHR17117">
    <property type="entry name" value="NADH-UBIQUINONE OXIDOREDUCTASE"/>
    <property type="match status" value="1"/>
</dbReference>
<dbReference type="Pfam" id="PF15880">
    <property type="entry name" value="NDUFV3"/>
    <property type="match status" value="1"/>
</dbReference>
<sequence length="108" mass="11941">MAAPCLLRQGRAGALKTMLQEAQVFRGLASTVSLSAESGKSEKGQPQNSKKQSPPKKPAPVPAEPFDNTTYKNLQHHDYSTYTFLDLNLELSKFRMPQPSSGRESPRH</sequence>
<protein>
    <recommendedName>
        <fullName>NADH dehydrogenase [ubiquinone] flavoprotein 3, mitochondrial</fullName>
    </recommendedName>
    <alternativeName>
        <fullName>Complex I-9kD</fullName>
        <shortName>CI-9kD</shortName>
    </alternativeName>
    <alternativeName>
        <fullName>NADH-ubiquinone oxidoreductase 9 kDa subunit</fullName>
    </alternativeName>
    <alternativeName>
        <fullName>Renal carcinoma antigen NY-REN-4</fullName>
    </alternativeName>
</protein>
<gene>
    <name type="primary">NDUFV3</name>
</gene>
<reference key="1">
    <citation type="journal article" date="1997" name="Genomics">
        <title>Molecular cloning and characterization of the human mitochondrial NADH:oxidoreductase 10-kDa gene (NDUFV3).</title>
        <authorList>
            <person name="de Coo R.F.M."/>
            <person name="Buddiger P."/>
            <person name="Smeets H.J.M."/>
            <person name="van Oost B.A."/>
        </authorList>
    </citation>
    <scope>NUCLEOTIDE SEQUENCE [GENOMIC DNA]</scope>
</reference>
<reference key="2">
    <citation type="journal article" date="2000" name="Genomics">
        <title>Refined localization of autosomal recessive nonsyndromic deafness DFNB10 locus using 34 novel microsatellite markers, genomic structure, and exclusion of six known genes in the region.</title>
        <authorList>
            <person name="Berry A."/>
            <person name="Scott H.S."/>
            <person name="Kudoh J."/>
            <person name="Talior I."/>
            <person name="Korostishevsky M."/>
            <person name="Wattenhofer M."/>
            <person name="Guipponi M."/>
            <person name="Barras C."/>
            <person name="Rossier C."/>
            <person name="Shibuya K."/>
            <person name="Wang J."/>
            <person name="Kawasaki K."/>
            <person name="Asakawa S."/>
            <person name="Minoshima S."/>
            <person name="Shimizu N."/>
            <person name="Antonarakis S.E."/>
            <person name="Bonne-Tamir B."/>
        </authorList>
    </citation>
    <scope>NUCLEOTIDE SEQUENCE [GENOMIC DNA]</scope>
</reference>
<reference key="3">
    <citation type="submission" date="2004-06" db="EMBL/GenBank/DDBJ databases">
        <title>Cloning of human full open reading frames in Gateway(TM) system entry vector (pDONR201).</title>
        <authorList>
            <person name="Halleck A."/>
            <person name="Ebert L."/>
            <person name="Mkoundinya M."/>
            <person name="Schick M."/>
            <person name="Eisenstein S."/>
            <person name="Neubert P."/>
            <person name="Kstrang K."/>
            <person name="Schatten R."/>
            <person name="Shen B."/>
            <person name="Henze S."/>
            <person name="Mar W."/>
            <person name="Korn B."/>
            <person name="Zuo D."/>
            <person name="Hu Y."/>
            <person name="LaBaer J."/>
        </authorList>
    </citation>
    <scope>NUCLEOTIDE SEQUENCE [LARGE SCALE MRNA] (ISOFORM 1)</scope>
</reference>
<reference key="4">
    <citation type="journal article" date="2004" name="Nat. Genet.">
        <title>Complete sequencing and characterization of 21,243 full-length human cDNAs.</title>
        <authorList>
            <person name="Ota T."/>
            <person name="Suzuki Y."/>
            <person name="Nishikawa T."/>
            <person name="Otsuki T."/>
            <person name="Sugiyama T."/>
            <person name="Irie R."/>
            <person name="Wakamatsu A."/>
            <person name="Hayashi K."/>
            <person name="Sato H."/>
            <person name="Nagai K."/>
            <person name="Kimura K."/>
            <person name="Makita H."/>
            <person name="Sekine M."/>
            <person name="Obayashi M."/>
            <person name="Nishi T."/>
            <person name="Shibahara T."/>
            <person name="Tanaka T."/>
            <person name="Ishii S."/>
            <person name="Yamamoto J."/>
            <person name="Saito K."/>
            <person name="Kawai Y."/>
            <person name="Isono Y."/>
            <person name="Nakamura Y."/>
            <person name="Nagahari K."/>
            <person name="Murakami K."/>
            <person name="Yasuda T."/>
            <person name="Iwayanagi T."/>
            <person name="Wagatsuma M."/>
            <person name="Shiratori A."/>
            <person name="Sudo H."/>
            <person name="Hosoiri T."/>
            <person name="Kaku Y."/>
            <person name="Kodaira H."/>
            <person name="Kondo H."/>
            <person name="Sugawara M."/>
            <person name="Takahashi M."/>
            <person name="Kanda K."/>
            <person name="Yokoi T."/>
            <person name="Furuya T."/>
            <person name="Kikkawa E."/>
            <person name="Omura Y."/>
            <person name="Abe K."/>
            <person name="Kamihara K."/>
            <person name="Katsuta N."/>
            <person name="Sato K."/>
            <person name="Tanikawa M."/>
            <person name="Yamazaki M."/>
            <person name="Ninomiya K."/>
            <person name="Ishibashi T."/>
            <person name="Yamashita H."/>
            <person name="Murakawa K."/>
            <person name="Fujimori K."/>
            <person name="Tanai H."/>
            <person name="Kimata M."/>
            <person name="Watanabe M."/>
            <person name="Hiraoka S."/>
            <person name="Chiba Y."/>
            <person name="Ishida S."/>
            <person name="Ono Y."/>
            <person name="Takiguchi S."/>
            <person name="Watanabe S."/>
            <person name="Yosida M."/>
            <person name="Hotuta T."/>
            <person name="Kusano J."/>
            <person name="Kanehori K."/>
            <person name="Takahashi-Fujii A."/>
            <person name="Hara H."/>
            <person name="Tanase T.-O."/>
            <person name="Nomura Y."/>
            <person name="Togiya S."/>
            <person name="Komai F."/>
            <person name="Hara R."/>
            <person name="Takeuchi K."/>
            <person name="Arita M."/>
            <person name="Imose N."/>
            <person name="Musashino K."/>
            <person name="Yuuki H."/>
            <person name="Oshima A."/>
            <person name="Sasaki N."/>
            <person name="Aotsuka S."/>
            <person name="Yoshikawa Y."/>
            <person name="Matsunawa H."/>
            <person name="Ichihara T."/>
            <person name="Shiohata N."/>
            <person name="Sano S."/>
            <person name="Moriya S."/>
            <person name="Momiyama H."/>
            <person name="Satoh N."/>
            <person name="Takami S."/>
            <person name="Terashima Y."/>
            <person name="Suzuki O."/>
            <person name="Nakagawa S."/>
            <person name="Senoh A."/>
            <person name="Mizoguchi H."/>
            <person name="Goto Y."/>
            <person name="Shimizu F."/>
            <person name="Wakebe H."/>
            <person name="Hishigaki H."/>
            <person name="Watanabe T."/>
            <person name="Sugiyama A."/>
            <person name="Takemoto M."/>
            <person name="Kawakami B."/>
            <person name="Yamazaki M."/>
            <person name="Watanabe K."/>
            <person name="Kumagai A."/>
            <person name="Itakura S."/>
            <person name="Fukuzumi Y."/>
            <person name="Fujimori Y."/>
            <person name="Komiyama M."/>
            <person name="Tashiro H."/>
            <person name="Tanigami A."/>
            <person name="Fujiwara T."/>
            <person name="Ono T."/>
            <person name="Yamada K."/>
            <person name="Fujii Y."/>
            <person name="Ozaki K."/>
            <person name="Hirao M."/>
            <person name="Ohmori Y."/>
            <person name="Kawabata A."/>
            <person name="Hikiji T."/>
            <person name="Kobatake N."/>
            <person name="Inagaki H."/>
            <person name="Ikema Y."/>
            <person name="Okamoto S."/>
            <person name="Okitani R."/>
            <person name="Kawakami T."/>
            <person name="Noguchi S."/>
            <person name="Itoh T."/>
            <person name="Shigeta K."/>
            <person name="Senba T."/>
            <person name="Matsumura K."/>
            <person name="Nakajima Y."/>
            <person name="Mizuno T."/>
            <person name="Morinaga M."/>
            <person name="Sasaki M."/>
            <person name="Togashi T."/>
            <person name="Oyama M."/>
            <person name="Hata H."/>
            <person name="Watanabe M."/>
            <person name="Komatsu T."/>
            <person name="Mizushima-Sugano J."/>
            <person name="Satoh T."/>
            <person name="Shirai Y."/>
            <person name="Takahashi Y."/>
            <person name="Nakagawa K."/>
            <person name="Okumura K."/>
            <person name="Nagase T."/>
            <person name="Nomura N."/>
            <person name="Kikuchi H."/>
            <person name="Masuho Y."/>
            <person name="Yamashita R."/>
            <person name="Nakai K."/>
            <person name="Yada T."/>
            <person name="Nakamura Y."/>
            <person name="Ohara O."/>
            <person name="Isogai T."/>
            <person name="Sugano S."/>
        </authorList>
    </citation>
    <scope>NUCLEOTIDE SEQUENCE [LARGE SCALE MRNA] (ISOFORM 1)</scope>
    <source>
        <tissue>Cerebellum</tissue>
    </source>
</reference>
<reference key="5">
    <citation type="journal article" date="2000" name="Nature">
        <title>The DNA sequence of human chromosome 21.</title>
        <authorList>
            <person name="Hattori M."/>
            <person name="Fujiyama A."/>
            <person name="Taylor T.D."/>
            <person name="Watanabe H."/>
            <person name="Yada T."/>
            <person name="Park H.-S."/>
            <person name="Toyoda A."/>
            <person name="Ishii K."/>
            <person name="Totoki Y."/>
            <person name="Choi D.-K."/>
            <person name="Groner Y."/>
            <person name="Soeda E."/>
            <person name="Ohki M."/>
            <person name="Takagi T."/>
            <person name="Sakaki Y."/>
            <person name="Taudien S."/>
            <person name="Blechschmidt K."/>
            <person name="Polley A."/>
            <person name="Menzel U."/>
            <person name="Delabar J."/>
            <person name="Kumpf K."/>
            <person name="Lehmann R."/>
            <person name="Patterson D."/>
            <person name="Reichwald K."/>
            <person name="Rump A."/>
            <person name="Schillhabel M."/>
            <person name="Schudy A."/>
            <person name="Zimmermann W."/>
            <person name="Rosenthal A."/>
            <person name="Kudoh J."/>
            <person name="Shibuya K."/>
            <person name="Kawasaki K."/>
            <person name="Asakawa S."/>
            <person name="Shintani A."/>
            <person name="Sasaki T."/>
            <person name="Nagamine K."/>
            <person name="Mitsuyama S."/>
            <person name="Antonarakis S.E."/>
            <person name="Minoshima S."/>
            <person name="Shimizu N."/>
            <person name="Nordsiek G."/>
            <person name="Hornischer K."/>
            <person name="Brandt P."/>
            <person name="Scharfe M."/>
            <person name="Schoen O."/>
            <person name="Desario A."/>
            <person name="Reichelt J."/>
            <person name="Kauer G."/>
            <person name="Bloecker H."/>
            <person name="Ramser J."/>
            <person name="Beck A."/>
            <person name="Klages S."/>
            <person name="Hennig S."/>
            <person name="Riesselmann L."/>
            <person name="Dagand E."/>
            <person name="Wehrmeyer S."/>
            <person name="Borzym K."/>
            <person name="Gardiner K."/>
            <person name="Nizetic D."/>
            <person name="Francis F."/>
            <person name="Lehrach H."/>
            <person name="Reinhardt R."/>
            <person name="Yaspo M.-L."/>
        </authorList>
    </citation>
    <scope>NUCLEOTIDE SEQUENCE [LARGE SCALE GENOMIC DNA]</scope>
</reference>
<reference key="6">
    <citation type="submission" date="2005-09" db="EMBL/GenBank/DDBJ databases">
        <authorList>
            <person name="Mural R.J."/>
            <person name="Istrail S."/>
            <person name="Sutton G.G."/>
            <person name="Florea L."/>
            <person name="Halpern A.L."/>
            <person name="Mobarry C.M."/>
            <person name="Lippert R."/>
            <person name="Walenz B."/>
            <person name="Shatkay H."/>
            <person name="Dew I."/>
            <person name="Miller J.R."/>
            <person name="Flanigan M.J."/>
            <person name="Edwards N.J."/>
            <person name="Bolanos R."/>
            <person name="Fasulo D."/>
            <person name="Halldorsson B.V."/>
            <person name="Hannenhalli S."/>
            <person name="Turner R."/>
            <person name="Yooseph S."/>
            <person name="Lu F."/>
            <person name="Nusskern D.R."/>
            <person name="Shue B.C."/>
            <person name="Zheng X.H."/>
            <person name="Zhong F."/>
            <person name="Delcher A.L."/>
            <person name="Huson D.H."/>
            <person name="Kravitz S.A."/>
            <person name="Mouchard L."/>
            <person name="Reinert K."/>
            <person name="Remington K.A."/>
            <person name="Clark A.G."/>
            <person name="Waterman M.S."/>
            <person name="Eichler E.E."/>
            <person name="Adams M.D."/>
            <person name="Hunkapiller M.W."/>
            <person name="Myers E.W."/>
            <person name="Venter J.C."/>
        </authorList>
    </citation>
    <scope>NUCLEOTIDE SEQUENCE [LARGE SCALE GENOMIC DNA]</scope>
</reference>
<reference key="7">
    <citation type="journal article" date="2004" name="Genome Res.">
        <title>The status, quality, and expansion of the NIH full-length cDNA project: the Mammalian Gene Collection (MGC).</title>
        <authorList>
            <consortium name="The MGC Project Team"/>
        </authorList>
    </citation>
    <scope>NUCLEOTIDE SEQUENCE [LARGE SCALE MRNA] (ISOFORMS 1 AND 2)</scope>
    <source>
        <tissue>Brain</tissue>
        <tissue>Uterus</tissue>
    </source>
</reference>
<reference key="8">
    <citation type="journal article" date="1999" name="Int. J. Cancer">
        <title>Antigens recognized by autologous antibody in patients with renal-cell carcinoma.</title>
        <authorList>
            <person name="Scanlan M.J."/>
            <person name="Gordan J.D."/>
            <person name="Williamson B."/>
            <person name="Stockert E."/>
            <person name="Bander N.H."/>
            <person name="Jongeneel C.V."/>
            <person name="Gure A.O."/>
            <person name="Jaeger D."/>
            <person name="Jaeger E."/>
            <person name="Knuth A."/>
            <person name="Chen Y.-T."/>
            <person name="Old L.J."/>
        </authorList>
    </citation>
    <scope>IDENTIFICATION AS A RENAL CANCER ANTIGEN</scope>
    <source>
        <tissue>Renal cell carcinoma</tissue>
    </source>
</reference>
<reference key="9">
    <citation type="journal article" date="2003" name="J. Biol. Chem.">
        <title>The subunit composition of the human NADH dehydrogenase obtained by rapid one-step immunopurification.</title>
        <authorList>
            <person name="Murray J."/>
            <person name="Zhang B."/>
            <person name="Taylor S.W."/>
            <person name="Oglesbee D."/>
            <person name="Fahy E."/>
            <person name="Marusich M.F."/>
            <person name="Ghosh S.S."/>
            <person name="Capaldi R.A."/>
        </authorList>
    </citation>
    <scope>IDENTIFICATION IN THE NADH-UBIQUINONE OXIDOREDUCTASE COMPLEX</scope>
    <scope>IDENTIFICATION BY MASS SPECTROMETRY</scope>
    <scope>SUBCELLULAR LOCATION</scope>
</reference>
<reference key="10">
    <citation type="journal article" date="2008" name="Mol. Cell">
        <title>Kinase-selective enrichment enables quantitative phosphoproteomics of the kinome across the cell cycle.</title>
        <authorList>
            <person name="Daub H."/>
            <person name="Olsen J.V."/>
            <person name="Bairlein M."/>
            <person name="Gnad F."/>
            <person name="Oppermann F.S."/>
            <person name="Korner R."/>
            <person name="Greff Z."/>
            <person name="Keri G."/>
            <person name="Stemmann O."/>
            <person name="Mann M."/>
        </authorList>
    </citation>
    <scope>IDENTIFICATION BY MASS SPECTROMETRY [LARGE SCALE ANALYSIS]</scope>
    <source>
        <tissue>Cervix carcinoma</tissue>
    </source>
</reference>
<reference key="11">
    <citation type="journal article" date="2008" name="Proc. Natl. Acad. Sci. U.S.A.">
        <title>A quantitative atlas of mitotic phosphorylation.</title>
        <authorList>
            <person name="Dephoure N."/>
            <person name="Zhou C."/>
            <person name="Villen J."/>
            <person name="Beausoleil S.A."/>
            <person name="Bakalarski C.E."/>
            <person name="Elledge S.J."/>
            <person name="Gygi S.P."/>
        </authorList>
    </citation>
    <scope>PHOSPHORYLATION [LARGE SCALE ANALYSIS] AT SER-160; SER-162 AND SER-164 (ISOFORM 2)</scope>
    <scope>IDENTIFICATION BY MASS SPECTROMETRY [LARGE SCALE ANALYSIS]</scope>
    <source>
        <tissue>Cervix carcinoma</tissue>
    </source>
</reference>
<reference key="12">
    <citation type="journal article" date="2009" name="Sci. Signal.">
        <title>Quantitative phosphoproteomic analysis of T cell receptor signaling reveals system-wide modulation of protein-protein interactions.</title>
        <authorList>
            <person name="Mayya V."/>
            <person name="Lundgren D.H."/>
            <person name="Hwang S.-I."/>
            <person name="Rezaul K."/>
            <person name="Wu L."/>
            <person name="Eng J.K."/>
            <person name="Rodionov V."/>
            <person name="Han D.K."/>
        </authorList>
    </citation>
    <scope>IDENTIFICATION BY MASS SPECTROMETRY [LARGE SCALE ANALYSIS]</scope>
    <source>
        <tissue>Leukemic T-cell</tissue>
    </source>
</reference>
<reference key="13">
    <citation type="journal article" date="2010" name="Sci. Signal.">
        <title>Quantitative phosphoproteomics reveals widespread full phosphorylation site occupancy during mitosis.</title>
        <authorList>
            <person name="Olsen J.V."/>
            <person name="Vermeulen M."/>
            <person name="Santamaria A."/>
            <person name="Kumar C."/>
            <person name="Miller M.L."/>
            <person name="Jensen L.J."/>
            <person name="Gnad F."/>
            <person name="Cox J."/>
            <person name="Jensen T.S."/>
            <person name="Nigg E.A."/>
            <person name="Brunak S."/>
            <person name="Mann M."/>
        </authorList>
    </citation>
    <scope>IDENTIFICATION BY MASS SPECTROMETRY [LARGE SCALE ANALYSIS]</scope>
    <source>
        <tissue>Cervix carcinoma</tissue>
    </source>
</reference>
<reference key="14">
    <citation type="journal article" date="2011" name="Sci. Signal.">
        <title>System-wide temporal characterization of the proteome and phosphoproteome of human embryonic stem cell differentiation.</title>
        <authorList>
            <person name="Rigbolt K.T."/>
            <person name="Prokhorova T.A."/>
            <person name="Akimov V."/>
            <person name="Henningsen J."/>
            <person name="Johansen P.T."/>
            <person name="Kratchmarova I."/>
            <person name="Kassem M."/>
            <person name="Mann M."/>
            <person name="Olsen J.V."/>
            <person name="Blagoev B."/>
        </authorList>
    </citation>
    <scope>IDENTIFICATION BY MASS SPECTROMETRY [LARGE SCALE ANALYSIS]</scope>
</reference>
<reference key="15">
    <citation type="journal article" date="2013" name="J. Proteome Res.">
        <title>Toward a comprehensive characterization of a human cancer cell phosphoproteome.</title>
        <authorList>
            <person name="Zhou H."/>
            <person name="Di Palma S."/>
            <person name="Preisinger C."/>
            <person name="Peng M."/>
            <person name="Polat A.N."/>
            <person name="Heck A.J."/>
            <person name="Mohammed S."/>
        </authorList>
    </citation>
    <scope>PHOSPHORYLATION [LARGE SCALE ANALYSIS] AT SER-105</scope>
    <scope>IDENTIFICATION BY MASS SPECTROMETRY [LARGE SCALE ANALYSIS]</scope>
    <source>
        <tissue>Cervix carcinoma</tissue>
        <tissue>Erythroleukemia</tissue>
    </source>
</reference>
<reference key="16">
    <citation type="journal article" date="2014" name="J. Proteomics">
        <title>An enzyme assisted RP-RPLC approach for in-depth analysis of human liver phosphoproteome.</title>
        <authorList>
            <person name="Bian Y."/>
            <person name="Song C."/>
            <person name="Cheng K."/>
            <person name="Dong M."/>
            <person name="Wang F."/>
            <person name="Huang J."/>
            <person name="Sun D."/>
            <person name="Wang L."/>
            <person name="Ye M."/>
            <person name="Zou H."/>
        </authorList>
    </citation>
    <scope>PHOSPHORYLATION [LARGE SCALE ANALYSIS] AT SER-162 AND SER-164 (ISOFORM 2)</scope>
    <scope>IDENTIFICATION BY MASS SPECTROMETRY [LARGE SCALE ANALYSIS]</scope>
    <source>
        <tissue>Liver</tissue>
    </source>
</reference>
<reference key="17">
    <citation type="journal article" date="2016" name="Nature">
        <title>Accessory subunits are integral for assembly and function of human mitochondrial complex I.</title>
        <authorList>
            <person name="Stroud D.A."/>
            <person name="Surgenor E.E."/>
            <person name="Formosa L.E."/>
            <person name="Reljic B."/>
            <person name="Frazier A.E."/>
            <person name="Dibley M.G."/>
            <person name="Osellame L.D."/>
            <person name="Stait T."/>
            <person name="Beilharz T.H."/>
            <person name="Thorburn D.R."/>
            <person name="Salim A."/>
            <person name="Ryan M.T."/>
        </authorList>
    </citation>
    <scope>FUNCTION</scope>
    <scope>IDENTIFICATION IN THE NADH-UBIQUINONE OXIDOREDUCTASE COMPLEX</scope>
</reference>
<accession>P56181</accession>
<accession>A8K0M1</accession>
<accession>J3KNX7</accession>
<accession>Q6FGD3</accession>
<accession>Q8WU60</accession>
<accession>Q9HCR5</accession>
<keyword id="KW-0002">3D-structure</keyword>
<keyword id="KW-0025">Alternative splicing</keyword>
<keyword id="KW-0249">Electron transport</keyword>
<keyword id="KW-0472">Membrane</keyword>
<keyword id="KW-0496">Mitochondrion</keyword>
<keyword id="KW-0999">Mitochondrion inner membrane</keyword>
<keyword id="KW-0597">Phosphoprotein</keyword>
<keyword id="KW-1267">Proteomics identification</keyword>
<keyword id="KW-1185">Reference proteome</keyword>
<keyword id="KW-0679">Respiratory chain</keyword>
<keyword id="KW-0809">Transit peptide</keyword>
<keyword id="KW-0813">Transport</keyword>
<proteinExistence type="evidence at protein level"/>